<name>COA3_KOMPG</name>
<sequence>MAQPDKYYNKYTYQMSPAMLRARRPYFWKNMGAFGILGGISLSVYLYTYNFLMQDDFENIPIPPIKDEDLAALRREYEEKKQLSK</sequence>
<feature type="chain" id="PRO_0000405445" description="Cytochrome c oxidase assembly factor 3, mitochondrial">
    <location>
        <begin position="1"/>
        <end position="85"/>
    </location>
</feature>
<feature type="topological domain" description="Mitochondrial matrix" evidence="1">
    <location>
        <begin position="1"/>
        <end position="25"/>
    </location>
</feature>
<feature type="transmembrane region" description="Helical" evidence="2">
    <location>
        <begin position="26"/>
        <end position="48"/>
    </location>
</feature>
<feature type="topological domain" description="Mitochondrial intermembrane" evidence="1">
    <location>
        <begin position="49"/>
        <end position="85"/>
    </location>
</feature>
<gene>
    <name type="primary">COA3</name>
    <name type="ordered locus">PAS_chr2-1_0565</name>
</gene>
<comment type="function">
    <text evidence="1">Required for assembly of cytochrome c oxidase (complex IV).</text>
</comment>
<comment type="subunit">
    <text evidence="1">Component of 250-400 kDa complexes called cytochrome oxidase assembly intermediates or COA complexes.</text>
</comment>
<comment type="subcellular location">
    <subcellularLocation>
        <location>Mitochondrion inner membrane</location>
        <topology>Single-pass membrane protein</topology>
    </subcellularLocation>
</comment>
<comment type="similarity">
    <text evidence="3">Belongs to the COA3 family.</text>
</comment>
<keyword id="KW-0472">Membrane</keyword>
<keyword id="KW-0496">Mitochondrion</keyword>
<keyword id="KW-0999">Mitochondrion inner membrane</keyword>
<keyword id="KW-1185">Reference proteome</keyword>
<keyword id="KW-0812">Transmembrane</keyword>
<keyword id="KW-1133">Transmembrane helix</keyword>
<organism>
    <name type="scientific">Komagataella phaffii (strain GS115 / ATCC 20864)</name>
    <name type="common">Yeast</name>
    <name type="synonym">Pichia pastoris</name>
    <dbReference type="NCBI Taxonomy" id="644223"/>
    <lineage>
        <taxon>Eukaryota</taxon>
        <taxon>Fungi</taxon>
        <taxon>Dikarya</taxon>
        <taxon>Ascomycota</taxon>
        <taxon>Saccharomycotina</taxon>
        <taxon>Pichiomycetes</taxon>
        <taxon>Pichiales</taxon>
        <taxon>Pichiaceae</taxon>
        <taxon>Komagataella</taxon>
    </lineage>
</organism>
<accession>C4R127</accession>
<dbReference type="EMBL" id="FN392320">
    <property type="protein sequence ID" value="CAY69201.1"/>
    <property type="molecule type" value="Genomic_DNA"/>
</dbReference>
<dbReference type="RefSeq" id="XP_002491481.1">
    <property type="nucleotide sequence ID" value="XM_002491436.1"/>
</dbReference>
<dbReference type="SMR" id="C4R127"/>
<dbReference type="FunCoup" id="C4R127">
    <property type="interactions" value="25"/>
</dbReference>
<dbReference type="STRING" id="644223.C4R127"/>
<dbReference type="EnsemblFungi" id="CAY69201">
    <property type="protein sequence ID" value="CAY69201"/>
    <property type="gene ID" value="PAS_chr2-1_0565"/>
</dbReference>
<dbReference type="GeneID" id="8198932"/>
<dbReference type="KEGG" id="ppa:PAS_chr2-1_0565"/>
<dbReference type="eggNOG" id="ENOG502S440">
    <property type="taxonomic scope" value="Eukaryota"/>
</dbReference>
<dbReference type="HOGENOM" id="CLU_153999_0_0_1"/>
<dbReference type="InParanoid" id="C4R127"/>
<dbReference type="OMA" id="WKMTPAM"/>
<dbReference type="OrthoDB" id="10018333at2759"/>
<dbReference type="Proteomes" id="UP000000314">
    <property type="component" value="Chromosome 2"/>
</dbReference>
<dbReference type="GO" id="GO:0005743">
    <property type="term" value="C:mitochondrial inner membrane"/>
    <property type="evidence" value="ECO:0007669"/>
    <property type="project" value="UniProtKB-SubCell"/>
</dbReference>
<dbReference type="GO" id="GO:0033617">
    <property type="term" value="P:mitochondrial cytochrome c oxidase assembly"/>
    <property type="evidence" value="ECO:0007669"/>
    <property type="project" value="InterPro"/>
</dbReference>
<dbReference type="InterPro" id="IPR041752">
    <property type="entry name" value="Coa3"/>
</dbReference>
<dbReference type="InterPro" id="IPR018628">
    <property type="entry name" value="Coa3_cc"/>
</dbReference>
<dbReference type="PANTHER" id="PTHR15642:SF3">
    <property type="entry name" value="CYTOCHROME C OXIDASE ASSEMBLY FACTOR 3 HOMOLOG, MITOCHONDRIAL"/>
    <property type="match status" value="1"/>
</dbReference>
<dbReference type="PANTHER" id="PTHR15642">
    <property type="entry name" value="CYTOCHROME C OXIDASE ASSEMBLY FACTOR 3, MITOCHONDRIAL"/>
    <property type="match status" value="1"/>
</dbReference>
<dbReference type="Pfam" id="PF09813">
    <property type="entry name" value="Coa3_cc"/>
    <property type="match status" value="1"/>
</dbReference>
<evidence type="ECO:0000250" key="1"/>
<evidence type="ECO:0000255" key="2"/>
<evidence type="ECO:0000305" key="3"/>
<protein>
    <recommendedName>
        <fullName>Cytochrome c oxidase assembly factor 3, mitochondrial</fullName>
    </recommendedName>
</protein>
<proteinExistence type="inferred from homology"/>
<reference key="1">
    <citation type="journal article" date="2009" name="Nat. Biotechnol.">
        <title>Genome sequence of the recombinant protein production host Pichia pastoris.</title>
        <authorList>
            <person name="De Schutter K."/>
            <person name="Lin Y.-C."/>
            <person name="Tiels P."/>
            <person name="Van Hecke A."/>
            <person name="Glinka S."/>
            <person name="Weber-Lehmann J."/>
            <person name="Rouze P."/>
            <person name="Van de Peer Y."/>
            <person name="Callewaert N."/>
        </authorList>
    </citation>
    <scope>NUCLEOTIDE SEQUENCE [LARGE SCALE GENOMIC DNA]</scope>
    <source>
        <strain>GS115 / ATCC 20864</strain>
    </source>
</reference>